<feature type="chain" id="PRO_0000286778" description="2-aminoethylphosphonate--pyruvate transaminase">
    <location>
        <begin position="1"/>
        <end position="368"/>
    </location>
</feature>
<feature type="modified residue" description="N6-(pyridoxal phosphate)lysine" evidence="1">
    <location>
        <position position="192"/>
    </location>
</feature>
<dbReference type="EC" id="2.6.1.37" evidence="1"/>
<dbReference type="EMBL" id="AE015451">
    <property type="protein sequence ID" value="AAN67822.1"/>
    <property type="molecule type" value="Genomic_DNA"/>
</dbReference>
<dbReference type="RefSeq" id="NP_744358.1">
    <property type="nucleotide sequence ID" value="NC_002947.4"/>
</dbReference>
<dbReference type="RefSeq" id="WP_010953191.1">
    <property type="nucleotide sequence ID" value="NZ_CP169744.1"/>
</dbReference>
<dbReference type="SMR" id="Q88KT0"/>
<dbReference type="STRING" id="160488.PP_2209"/>
<dbReference type="PaxDb" id="160488-PP_2209"/>
<dbReference type="KEGG" id="ppu:PP_2209"/>
<dbReference type="PATRIC" id="fig|160488.4.peg.2331"/>
<dbReference type="eggNOG" id="COG0075">
    <property type="taxonomic scope" value="Bacteria"/>
</dbReference>
<dbReference type="HOGENOM" id="CLU_027686_3_1_6"/>
<dbReference type="OrthoDB" id="9766472at2"/>
<dbReference type="PhylomeDB" id="Q88KT0"/>
<dbReference type="BioCyc" id="PPUT160488:G1G01-2350-MONOMER"/>
<dbReference type="Proteomes" id="UP000000556">
    <property type="component" value="Chromosome"/>
</dbReference>
<dbReference type="GO" id="GO:0047304">
    <property type="term" value="F:2-aminoethylphosphonate-pyruvate transaminase activity"/>
    <property type="evidence" value="ECO:0007669"/>
    <property type="project" value="UniProtKB-UniRule"/>
</dbReference>
<dbReference type="GO" id="GO:0019700">
    <property type="term" value="P:organic phosphonate catabolic process"/>
    <property type="evidence" value="ECO:0007669"/>
    <property type="project" value="InterPro"/>
</dbReference>
<dbReference type="Gene3D" id="3.90.1150.10">
    <property type="entry name" value="Aspartate Aminotransferase, domain 1"/>
    <property type="match status" value="1"/>
</dbReference>
<dbReference type="Gene3D" id="3.40.640.10">
    <property type="entry name" value="Type I PLP-dependent aspartate aminotransferase-like (Major domain)"/>
    <property type="match status" value="1"/>
</dbReference>
<dbReference type="HAMAP" id="MF_01376">
    <property type="entry name" value="PhnW_aminotrans_5"/>
    <property type="match status" value="1"/>
</dbReference>
<dbReference type="InterPro" id="IPR000192">
    <property type="entry name" value="Aminotrans_V_dom"/>
</dbReference>
<dbReference type="InterPro" id="IPR012703">
    <property type="entry name" value="NH2EtPonate_pyrv_transaminase"/>
</dbReference>
<dbReference type="InterPro" id="IPR015424">
    <property type="entry name" value="PyrdxlP-dep_Trfase"/>
</dbReference>
<dbReference type="InterPro" id="IPR015421">
    <property type="entry name" value="PyrdxlP-dep_Trfase_major"/>
</dbReference>
<dbReference type="InterPro" id="IPR015422">
    <property type="entry name" value="PyrdxlP-dep_Trfase_small"/>
</dbReference>
<dbReference type="InterPro" id="IPR024169">
    <property type="entry name" value="SP_NH2Trfase/AEP_transaminase"/>
</dbReference>
<dbReference type="NCBIfam" id="TIGR03301">
    <property type="entry name" value="PhnW-AepZ"/>
    <property type="match status" value="1"/>
</dbReference>
<dbReference type="NCBIfam" id="NF010006">
    <property type="entry name" value="PRK13479.1"/>
    <property type="match status" value="1"/>
</dbReference>
<dbReference type="NCBIfam" id="TIGR02326">
    <property type="entry name" value="transamin_PhnW"/>
    <property type="match status" value="1"/>
</dbReference>
<dbReference type="PANTHER" id="PTHR42778">
    <property type="entry name" value="2-AMINOETHYLPHOSPHONATE--PYRUVATE TRANSAMINASE"/>
    <property type="match status" value="1"/>
</dbReference>
<dbReference type="PANTHER" id="PTHR42778:SF1">
    <property type="entry name" value="2-AMINOETHYLPHOSPHONATE--PYRUVATE TRANSAMINASE"/>
    <property type="match status" value="1"/>
</dbReference>
<dbReference type="Pfam" id="PF00266">
    <property type="entry name" value="Aminotran_5"/>
    <property type="match status" value="1"/>
</dbReference>
<dbReference type="PIRSF" id="PIRSF000524">
    <property type="entry name" value="SPT"/>
    <property type="match status" value="1"/>
</dbReference>
<dbReference type="SUPFAM" id="SSF53383">
    <property type="entry name" value="PLP-dependent transferases"/>
    <property type="match status" value="1"/>
</dbReference>
<proteinExistence type="inferred from homology"/>
<sequence length="368" mass="39712">MSNAPILLTPGPLTTSIRTRQAMLVDWGSWDRDFNQLTASVCEQLLAIIDGASSHHCVPLQGSGTFAVEAAIGTLVPRDGKVLVLINGAYGQRLAKICKVLGRTYSTFETAEDQPTTAADVDRLLAEDPAITHVALIHCETSTGILNPLPEIAQVIKRHGKRLIIDAMSSFGALPIDAREIPFEALIAASGKCLEGVPGMGFVFAEKSALAAAEGNAHSLAMDLHDQHAYMAKTGQWRFTPPTHVVAALHEALQQYNEEGGLPARHQRYADNCKTLLDGMAAIGLRSFLPAEIQAPIIVTFHAPTDARYQFKDFYERVKAKGFILYPGKLTQVETFRVGCIGVVGADGMQAAVNAVAEVLREMEVLDI</sequence>
<comment type="function">
    <text evidence="1">Involved in phosphonate degradation.</text>
</comment>
<comment type="catalytic activity">
    <reaction evidence="1">
        <text>(2-aminoethyl)phosphonate + pyruvate = phosphonoacetaldehyde + L-alanine</text>
        <dbReference type="Rhea" id="RHEA:17021"/>
        <dbReference type="ChEBI" id="CHEBI:15361"/>
        <dbReference type="ChEBI" id="CHEBI:57418"/>
        <dbReference type="ChEBI" id="CHEBI:57972"/>
        <dbReference type="ChEBI" id="CHEBI:58383"/>
        <dbReference type="EC" id="2.6.1.37"/>
    </reaction>
</comment>
<comment type="cofactor">
    <cofactor evidence="1">
        <name>pyridoxal 5'-phosphate</name>
        <dbReference type="ChEBI" id="CHEBI:597326"/>
    </cofactor>
</comment>
<comment type="subunit">
    <text evidence="1">Homodimer.</text>
</comment>
<comment type="similarity">
    <text evidence="1">Belongs to the class-V pyridoxal-phosphate-dependent aminotransferase family. PhnW subfamily.</text>
</comment>
<keyword id="KW-0032">Aminotransferase</keyword>
<keyword id="KW-0663">Pyridoxal phosphate</keyword>
<keyword id="KW-0670">Pyruvate</keyword>
<keyword id="KW-1185">Reference proteome</keyword>
<keyword id="KW-0808">Transferase</keyword>
<protein>
    <recommendedName>
        <fullName evidence="1">2-aminoethylphosphonate--pyruvate transaminase</fullName>
        <ecNumber evidence="1">2.6.1.37</ecNumber>
    </recommendedName>
    <alternativeName>
        <fullName evidence="1">2-aminoethylphosphonate aminotransferase</fullName>
    </alternativeName>
    <alternativeName>
        <fullName evidence="1">AEP transaminase</fullName>
        <shortName evidence="1">AEPT</shortName>
    </alternativeName>
</protein>
<accession>Q88KT0</accession>
<organism>
    <name type="scientific">Pseudomonas putida (strain ATCC 47054 / DSM 6125 / CFBP 8728 / NCIMB 11950 / KT2440)</name>
    <dbReference type="NCBI Taxonomy" id="160488"/>
    <lineage>
        <taxon>Bacteria</taxon>
        <taxon>Pseudomonadati</taxon>
        <taxon>Pseudomonadota</taxon>
        <taxon>Gammaproteobacteria</taxon>
        <taxon>Pseudomonadales</taxon>
        <taxon>Pseudomonadaceae</taxon>
        <taxon>Pseudomonas</taxon>
    </lineage>
</organism>
<name>PHNW_PSEPK</name>
<evidence type="ECO:0000255" key="1">
    <source>
        <dbReference type="HAMAP-Rule" id="MF_01376"/>
    </source>
</evidence>
<gene>
    <name evidence="1" type="primary">phnW</name>
    <name type="ordered locus">PP_2209</name>
</gene>
<reference key="1">
    <citation type="journal article" date="2002" name="Environ. Microbiol.">
        <title>Complete genome sequence and comparative analysis of the metabolically versatile Pseudomonas putida KT2440.</title>
        <authorList>
            <person name="Nelson K.E."/>
            <person name="Weinel C."/>
            <person name="Paulsen I.T."/>
            <person name="Dodson R.J."/>
            <person name="Hilbert H."/>
            <person name="Martins dos Santos V.A.P."/>
            <person name="Fouts D.E."/>
            <person name="Gill S.R."/>
            <person name="Pop M."/>
            <person name="Holmes M."/>
            <person name="Brinkac L.M."/>
            <person name="Beanan M.J."/>
            <person name="DeBoy R.T."/>
            <person name="Daugherty S.C."/>
            <person name="Kolonay J.F."/>
            <person name="Madupu R."/>
            <person name="Nelson W.C."/>
            <person name="White O."/>
            <person name="Peterson J.D."/>
            <person name="Khouri H.M."/>
            <person name="Hance I."/>
            <person name="Chris Lee P."/>
            <person name="Holtzapple E.K."/>
            <person name="Scanlan D."/>
            <person name="Tran K."/>
            <person name="Moazzez A."/>
            <person name="Utterback T.R."/>
            <person name="Rizzo M."/>
            <person name="Lee K."/>
            <person name="Kosack D."/>
            <person name="Moestl D."/>
            <person name="Wedler H."/>
            <person name="Lauber J."/>
            <person name="Stjepandic D."/>
            <person name="Hoheisel J."/>
            <person name="Straetz M."/>
            <person name="Heim S."/>
            <person name="Kiewitz C."/>
            <person name="Eisen J.A."/>
            <person name="Timmis K.N."/>
            <person name="Duesterhoeft A."/>
            <person name="Tuemmler B."/>
            <person name="Fraser C.M."/>
        </authorList>
    </citation>
    <scope>NUCLEOTIDE SEQUENCE [LARGE SCALE GENOMIC DNA]</scope>
    <source>
        <strain>ATCC 47054 / DSM 6125 / CFBP 8728 / NCIMB 11950 / KT2440</strain>
    </source>
</reference>